<accession>A0A1D8PFE5</accession>
<organism>
    <name type="scientific">Candida albicans (strain SC5314 / ATCC MYA-2876)</name>
    <name type="common">Yeast</name>
    <dbReference type="NCBI Taxonomy" id="237561"/>
    <lineage>
        <taxon>Eukaryota</taxon>
        <taxon>Fungi</taxon>
        <taxon>Dikarya</taxon>
        <taxon>Ascomycota</taxon>
        <taxon>Saccharomycotina</taxon>
        <taxon>Pichiomycetes</taxon>
        <taxon>Debaryomycetaceae</taxon>
        <taxon>Candida/Lodderomyces clade</taxon>
        <taxon>Candida</taxon>
    </lineage>
</organism>
<comment type="function">
    <text evidence="3">Required for establishing sites of emergence of yeast and hyphal daughters and for maintaining the linearity of hyphal growth, but not involved in responses that require a reorientation of the direction of already established hyphal growth (tropisms) (PubMed:23608319). Does not play a role in penetration or injury of human epithelial cells (PubMed:23608319).</text>
</comment>
<comment type="subcellular location">
    <subcellularLocation>
        <location evidence="3">Cell membrane</location>
        <topology evidence="1">Single-pass type I membrane protein</topology>
    </subcellularLocation>
    <subcellularLocation>
        <location evidence="3">Cell tip</location>
    </subcellularLocation>
</comment>
<comment type="disruption phenotype">
    <text evidence="3">Leads to randomly positioned branch sites and reduced bipolar positioning of secondary hyphae.</text>
</comment>
<comment type="similarity">
    <text evidence="5">Belongs to the RAX2 family.</text>
</comment>
<name>RAX2_CANAL</name>
<feature type="signal peptide" evidence="1">
    <location>
        <begin position="1"/>
        <end position="21"/>
    </location>
</feature>
<feature type="chain" id="PRO_5009111071" description="Polarized growth protein RAX2">
    <location>
        <begin position="22"/>
        <end position="1393"/>
    </location>
</feature>
<feature type="topological domain" description="Extracellular" evidence="1">
    <location>
        <begin position="22"/>
        <end position="1329"/>
    </location>
</feature>
<feature type="transmembrane region" description="Helical" evidence="1">
    <location>
        <begin position="1330"/>
        <end position="1350"/>
    </location>
</feature>
<feature type="topological domain" description="Cytoplasmic" evidence="1">
    <location>
        <begin position="1351"/>
        <end position="1393"/>
    </location>
</feature>
<feature type="glycosylation site" description="N-linked (GlcNAc...) asparagine" evidence="2">
    <location>
        <position position="62"/>
    </location>
</feature>
<feature type="glycosylation site" description="N-linked (GlcNAc...) asparagine" evidence="2">
    <location>
        <position position="85"/>
    </location>
</feature>
<feature type="glycosylation site" description="N-linked (GlcNAc...) asparagine" evidence="2">
    <location>
        <position position="105"/>
    </location>
</feature>
<feature type="glycosylation site" description="N-linked (GlcNAc...) asparagine" evidence="2">
    <location>
        <position position="125"/>
    </location>
</feature>
<feature type="glycosylation site" description="N-linked (GlcNAc...) asparagine" evidence="2">
    <location>
        <position position="133"/>
    </location>
</feature>
<feature type="glycosylation site" description="N-linked (GlcNAc...) asparagine" evidence="2">
    <location>
        <position position="139"/>
    </location>
</feature>
<feature type="glycosylation site" description="N-linked (GlcNAc...) asparagine" evidence="2">
    <location>
        <position position="164"/>
    </location>
</feature>
<feature type="glycosylation site" description="N-linked (GlcNAc...) asparagine" evidence="2">
    <location>
        <position position="186"/>
    </location>
</feature>
<feature type="glycosylation site" description="N-linked (GlcNAc...) asparagine" evidence="2">
    <location>
        <position position="195"/>
    </location>
</feature>
<feature type="glycosylation site" description="N-linked (GlcNAc...) asparagine" evidence="2">
    <location>
        <position position="212"/>
    </location>
</feature>
<feature type="glycosylation site" description="N-linked (GlcNAc...) asparagine" evidence="2">
    <location>
        <position position="256"/>
    </location>
</feature>
<feature type="glycosylation site" description="N-linked (GlcNAc...) asparagine" evidence="2">
    <location>
        <position position="260"/>
    </location>
</feature>
<feature type="glycosylation site" description="N-linked (GlcNAc...) asparagine" evidence="2">
    <location>
        <position position="266"/>
    </location>
</feature>
<feature type="glycosylation site" description="N-linked (GlcNAc...) asparagine" evidence="2">
    <location>
        <position position="269"/>
    </location>
</feature>
<feature type="glycosylation site" description="N-linked (GlcNAc...) asparagine" evidence="2">
    <location>
        <position position="362"/>
    </location>
</feature>
<feature type="glycosylation site" description="N-linked (GlcNAc...) asparagine" evidence="2">
    <location>
        <position position="398"/>
    </location>
</feature>
<feature type="glycosylation site" description="N-linked (GlcNAc...) asparagine" evidence="2">
    <location>
        <position position="405"/>
    </location>
</feature>
<feature type="glycosylation site" description="N-linked (GlcNAc...) asparagine" evidence="2">
    <location>
        <position position="479"/>
    </location>
</feature>
<feature type="glycosylation site" description="N-linked (GlcNAc...) asparagine" evidence="2">
    <location>
        <position position="536"/>
    </location>
</feature>
<feature type="glycosylation site" description="N-linked (GlcNAc...) asparagine" evidence="2">
    <location>
        <position position="542"/>
    </location>
</feature>
<feature type="glycosylation site" description="N-linked (GlcNAc...) asparagine" evidence="2">
    <location>
        <position position="565"/>
    </location>
</feature>
<feature type="glycosylation site" description="N-linked (GlcNAc...) asparagine" evidence="2">
    <location>
        <position position="599"/>
    </location>
</feature>
<feature type="glycosylation site" description="N-linked (GlcNAc...) asparagine" evidence="2">
    <location>
        <position position="646"/>
    </location>
</feature>
<feature type="glycosylation site" description="N-linked (GlcNAc...) asparagine" evidence="2">
    <location>
        <position position="649"/>
    </location>
</feature>
<feature type="glycosylation site" description="N-linked (GlcNAc...) asparagine" evidence="2">
    <location>
        <position position="653"/>
    </location>
</feature>
<feature type="glycosylation site" description="N-linked (GlcNAc...) asparagine" evidence="2">
    <location>
        <position position="674"/>
    </location>
</feature>
<feature type="glycosylation site" description="N-linked (GlcNAc...) asparagine" evidence="2">
    <location>
        <position position="689"/>
    </location>
</feature>
<feature type="glycosylation site" description="N-linked (GlcNAc...) asparagine" evidence="2">
    <location>
        <position position="696"/>
    </location>
</feature>
<feature type="glycosylation site" description="N-linked (GlcNAc...) asparagine" evidence="2">
    <location>
        <position position="702"/>
    </location>
</feature>
<feature type="glycosylation site" description="N-linked (GlcNAc...) asparagine" evidence="2">
    <location>
        <position position="714"/>
    </location>
</feature>
<feature type="glycosylation site" description="N-linked (GlcNAc...) asparagine" evidence="2">
    <location>
        <position position="747"/>
    </location>
</feature>
<feature type="glycosylation site" description="N-linked (GlcNAc...) asparagine" evidence="2">
    <location>
        <position position="764"/>
    </location>
</feature>
<feature type="glycosylation site" description="N-linked (GlcNAc...) asparagine" evidence="2">
    <location>
        <position position="768"/>
    </location>
</feature>
<feature type="glycosylation site" description="N-linked (GlcNAc...) asparagine" evidence="2">
    <location>
        <position position="792"/>
    </location>
</feature>
<feature type="glycosylation site" description="N-linked (GlcNAc...) asparagine" evidence="2">
    <location>
        <position position="829"/>
    </location>
</feature>
<feature type="glycosylation site" description="N-linked (GlcNAc...) asparagine" evidence="2">
    <location>
        <position position="863"/>
    </location>
</feature>
<feature type="glycosylation site" description="N-linked (GlcNAc...) asparagine" evidence="2">
    <location>
        <position position="899"/>
    </location>
</feature>
<feature type="glycosylation site" description="N-linked (GlcNAc...) asparagine" evidence="2">
    <location>
        <position position="935"/>
    </location>
</feature>
<feature type="glycosylation site" description="N-linked (GlcNAc...) asparagine" evidence="2">
    <location>
        <position position="946"/>
    </location>
</feature>
<feature type="glycosylation site" description="N-linked (GlcNAc...) asparagine" evidence="2">
    <location>
        <position position="958"/>
    </location>
</feature>
<feature type="glycosylation site" description="N-linked (GlcNAc...) asparagine" evidence="2">
    <location>
        <position position="985"/>
    </location>
</feature>
<feature type="glycosylation site" description="N-linked (GlcNAc...) asparagine" evidence="2">
    <location>
        <position position="1020"/>
    </location>
</feature>
<feature type="glycosylation site" description="N-linked (GlcNAc...) asparagine" evidence="2">
    <location>
        <position position="1030"/>
    </location>
</feature>
<feature type="glycosylation site" description="N-linked (GlcNAc...) asparagine" evidence="2">
    <location>
        <position position="1041"/>
    </location>
</feature>
<feature type="glycosylation site" description="N-linked (GlcNAc...) asparagine" evidence="2">
    <location>
        <position position="1213"/>
    </location>
</feature>
<feature type="glycosylation site" description="N-linked (GlcNAc...) asparagine" evidence="2">
    <location>
        <position position="1232"/>
    </location>
</feature>
<feature type="glycosylation site" description="N-linked (GlcNAc...) asparagine" evidence="2">
    <location>
        <position position="1262"/>
    </location>
</feature>
<feature type="glycosylation site" description="N-linked (GlcNAc...) asparagine" evidence="2">
    <location>
        <position position="1323"/>
    </location>
</feature>
<protein>
    <recommendedName>
        <fullName evidence="4">Polarized growth protein RAX2</fullName>
    </recommendedName>
</protein>
<keyword id="KW-0131">Cell cycle</keyword>
<keyword id="KW-0132">Cell division</keyword>
<keyword id="KW-1003">Cell membrane</keyword>
<keyword id="KW-0325">Glycoprotein</keyword>
<keyword id="KW-0472">Membrane</keyword>
<keyword id="KW-1185">Reference proteome</keyword>
<keyword id="KW-0732">Signal</keyword>
<keyword id="KW-0812">Transmembrane</keyword>
<keyword id="KW-1133">Transmembrane helix</keyword>
<gene>
    <name evidence="4" type="primary">RAX2</name>
    <name type="ordered locus">CAALFM_C112510WA</name>
    <name type="ordered locus">orf19.11249</name>
</gene>
<reference key="1">
    <citation type="journal article" date="2004" name="Proc. Natl. Acad. Sci. U.S.A.">
        <title>The diploid genome sequence of Candida albicans.</title>
        <authorList>
            <person name="Jones T."/>
            <person name="Federspiel N.A."/>
            <person name="Chibana H."/>
            <person name="Dungan J."/>
            <person name="Kalman S."/>
            <person name="Magee B.B."/>
            <person name="Newport G."/>
            <person name="Thorstenson Y.R."/>
            <person name="Agabian N."/>
            <person name="Magee P.T."/>
            <person name="Davis R.W."/>
            <person name="Scherer S."/>
        </authorList>
    </citation>
    <scope>NUCLEOTIDE SEQUENCE [LARGE SCALE GENOMIC DNA]</scope>
    <source>
        <strain>SC5314 / ATCC MYA-2876</strain>
    </source>
</reference>
<reference key="2">
    <citation type="journal article" date="2007" name="Genome Biol.">
        <title>Assembly of the Candida albicans genome into sixteen supercontigs aligned on the eight chromosomes.</title>
        <authorList>
            <person name="van het Hoog M."/>
            <person name="Rast T.J."/>
            <person name="Martchenko M."/>
            <person name="Grindle S."/>
            <person name="Dignard D."/>
            <person name="Hogues H."/>
            <person name="Cuomo C."/>
            <person name="Berriman M."/>
            <person name="Scherer S."/>
            <person name="Magee B.B."/>
            <person name="Whiteway M."/>
            <person name="Chibana H."/>
            <person name="Nantel A."/>
            <person name="Magee P.T."/>
        </authorList>
    </citation>
    <scope>GENOME REANNOTATION</scope>
    <source>
        <strain>SC5314 / ATCC MYA-2876</strain>
    </source>
</reference>
<reference key="3">
    <citation type="journal article" date="2013" name="Genome Biol.">
        <title>Assembly of a phased diploid Candida albicans genome facilitates allele-specific measurements and provides a simple model for repeat and indel structure.</title>
        <authorList>
            <person name="Muzzey D."/>
            <person name="Schwartz K."/>
            <person name="Weissman J.S."/>
            <person name="Sherlock G."/>
        </authorList>
    </citation>
    <scope>NUCLEOTIDE SEQUENCE [LARGE SCALE GENOMIC DNA]</scope>
    <scope>GENOME REANNOTATION</scope>
    <source>
        <strain>SC5314 / ATCC MYA-2876</strain>
    </source>
</reference>
<reference key="4">
    <citation type="journal article" date="2013" name="Fungal Genet. Biol.">
        <title>Rax2 is important for directional establishment of growth sites, but not for reorientation of growth axes, during Candida albicans hyphal morphogenesis.</title>
        <authorList>
            <person name="Gonia S."/>
            <person name="Norton J."/>
            <person name="Watanaskul L."/>
            <person name="Pulver R."/>
            <person name="Morrison E."/>
            <person name="Brand A."/>
            <person name="Gale C.A."/>
        </authorList>
    </citation>
    <scope>FUNCTION</scope>
    <scope>DISRUPTION PHENOTYPE</scope>
    <scope>SUBCELLULAR LOCATION</scope>
</reference>
<sequence>MLVQFQQLLLLLISIIKLCQADDNDNSFFQPVSQPSLNYKDTGNRIGLLGSFDALSFYSFVNSSQIVNDPDTSVSIFQKKRDVSNSSSSSTSFSNSLYLQDITNNYSLKFADINGQVNQLFKISNDSVVLNGNFTSFNNQSVISPIIFTISSREVTKIFSDDINGSVKTIFLDNDLIYLGGNFKFNNTYSAAVYNITAKKVHSTPFQGFGPNSSINSIAKVLNGDKEKEDNEEELGSILFGGQFDTLGLSDLLVHNITSNNTKKHNTSNTSIISAEQLISLRHGTFTSVNGESSEEDAAAIVCPSDNKEWAAQKNSGAEWKVELPDEMKGIHPTKARIYIPEGPNGIKLFRIYSYPNNGIMNLTYIDPATNELAYCDAWCPLLNYDDLNDHVDNNILNATELNENNSVFVDEQDGSYFQYYDPSTKTKNLGYASNFQEFAFVDNVGVDTVGVTIIDWYGDQGILAGFELYQNAITVYGNDSLNDPNCQSDASDDTNNNAVINSGSFKSVQSINPAITNTDYLVTSDTNAKITLYPNISYSGNYSIIMMTPGCAYDGSCARRAIVNVTVVGDDNDVLSTKTIYQNNENNKFDYLFYGHLNGSKTSTSSNRIEISYMGTVTEGVQDPYMVVDKVIANIVSLDNYYDKNSTNHTRNNTGYELAPIKLNGLFEYSLANFSQFDEQLVHYKRNNKTYISLNNTFVGNSSINLLSGELSNQSRIDQISLGPKQQDGNKQSLLLLGKFESDSKNITLSNNNLITLTIDSYNNTLNETNIELPSRLTKRDTQTILGGNFNNSITRLIELPGCFLAIGDFALSGKDGSSSIKDLSNNNQSVSSANNFALYSDDQWYSFGNDYTSNDFNQFTNLTLDSVEYYVFSGNGQFRTWDNDNFKWVTDPTKQLNLTQAAQINDHQQILGGTGFSTMQFQSVDQAYIADGNFSKFGIDVIANKSFMISNSYYVNSSLSVIGGKFETKDVKNVGLISNSDPNNTISALQGSIVWGDNTLIQSLYVDSSDEYLFMGVNGSVQINEQTNVTGIVIYDLVNNTFTSFQPAELSHSNGDPISVNSMVLFDKGNKLLVGGDFDLAGSLSCPSLCVYDITNTRWINPQNDATTTQSIGGVVTDMKFFQSNQVLITGNGLQLNGNSGIKFLIYNFNSNSFSVKDSLNKIDQTVEKFILNDENNKNLDGRMIAFGEKSISGFDGSNWQRIDSDIIYENFTKFNDMKLLTLDKPSDYNQTYFDKSQIFTIAGVFRLKDYGLVNMALFNGTSWIPYVFTSLQQQKSTGSGSGSGSGSRSSSLQIGQIQSILIDDSYRFQSSDDLKKTNKNLSRGKVVGISLACALGSTTLLGLLYIIPYFALFKNRKDGYFQPERIHEDEMMDAVNPEDLLHEIDLQREK</sequence>
<proteinExistence type="inferred from homology"/>
<evidence type="ECO:0000255" key="1"/>
<evidence type="ECO:0000255" key="2">
    <source>
        <dbReference type="PROSITE-ProRule" id="PRU00498"/>
    </source>
</evidence>
<evidence type="ECO:0000269" key="3">
    <source>
    </source>
</evidence>
<evidence type="ECO:0000303" key="4">
    <source>
    </source>
</evidence>
<evidence type="ECO:0000305" key="5"/>
<dbReference type="EMBL" id="CP017623">
    <property type="protein sequence ID" value="AOW26866.1"/>
    <property type="molecule type" value="Genomic_DNA"/>
</dbReference>
<dbReference type="RefSeq" id="XP_710795.2">
    <property type="nucleotide sequence ID" value="XM_705703.2"/>
</dbReference>
<dbReference type="FunCoup" id="A0A1D8PFE5">
    <property type="interactions" value="83"/>
</dbReference>
<dbReference type="STRING" id="237561.A0A1D8PFE5"/>
<dbReference type="EnsemblFungi" id="C1_12510W_A-T">
    <property type="protein sequence ID" value="C1_12510W_A-T-p1"/>
    <property type="gene ID" value="C1_12510W_A"/>
</dbReference>
<dbReference type="GeneID" id="3647610"/>
<dbReference type="KEGG" id="cal:CAALFM_C112510WA"/>
<dbReference type="CGD" id="CAL0000190497">
    <property type="gene designation" value="RAX2"/>
</dbReference>
<dbReference type="VEuPathDB" id="FungiDB:C1_12510W_A"/>
<dbReference type="InParanoid" id="A0A1D8PFE5"/>
<dbReference type="OrthoDB" id="2503993at2759"/>
<dbReference type="Proteomes" id="UP000000559">
    <property type="component" value="Chromosome 1"/>
</dbReference>
<dbReference type="GO" id="GO:0009986">
    <property type="term" value="C:cell surface"/>
    <property type="evidence" value="ECO:0000314"/>
    <property type="project" value="CGD"/>
</dbReference>
<dbReference type="GO" id="GO:0005935">
    <property type="term" value="C:cellular bud neck"/>
    <property type="evidence" value="ECO:0000318"/>
    <property type="project" value="GO_Central"/>
</dbReference>
<dbReference type="GO" id="GO:0005621">
    <property type="term" value="C:cellular bud scar"/>
    <property type="evidence" value="ECO:0000318"/>
    <property type="project" value="GO_Central"/>
</dbReference>
<dbReference type="GO" id="GO:0001411">
    <property type="term" value="C:hyphal tip"/>
    <property type="evidence" value="ECO:0000314"/>
    <property type="project" value="CGD"/>
</dbReference>
<dbReference type="GO" id="GO:0005886">
    <property type="term" value="C:plasma membrane"/>
    <property type="evidence" value="ECO:0000314"/>
    <property type="project" value="CGD"/>
</dbReference>
<dbReference type="GO" id="GO:1902929">
    <property type="term" value="C:plasma membrane of growing cell tip"/>
    <property type="evidence" value="ECO:0000318"/>
    <property type="project" value="GO_Central"/>
</dbReference>
<dbReference type="GO" id="GO:0000282">
    <property type="term" value="P:cellular bud site selection"/>
    <property type="evidence" value="ECO:0000315"/>
    <property type="project" value="CGD"/>
</dbReference>
<dbReference type="GO" id="GO:0030448">
    <property type="term" value="P:hyphal growth"/>
    <property type="evidence" value="ECO:0000315"/>
    <property type="project" value="CGD"/>
</dbReference>
<dbReference type="InterPro" id="IPR011043">
    <property type="entry name" value="Gal_Oxase/kelch_b-propeller"/>
</dbReference>
<dbReference type="InterPro" id="IPR024982">
    <property type="entry name" value="Rax2-like_C"/>
</dbReference>
<dbReference type="InterPro" id="IPR048266">
    <property type="entry name" value="Rax2-like_second"/>
</dbReference>
<dbReference type="InterPro" id="IPR048265">
    <property type="entry name" value="Rax2-like_third"/>
</dbReference>
<dbReference type="PANTHER" id="PTHR31778">
    <property type="entry name" value="BUD SITE SELECTION PROTEIN RAX2"/>
    <property type="match status" value="1"/>
</dbReference>
<dbReference type="PANTHER" id="PTHR31778:SF2">
    <property type="entry name" value="BUD SITE SELECTION PROTEIN RAX2"/>
    <property type="match status" value="1"/>
</dbReference>
<dbReference type="Pfam" id="PF12768">
    <property type="entry name" value="Rax2"/>
    <property type="match status" value="1"/>
</dbReference>
<dbReference type="Pfam" id="PF20842">
    <property type="entry name" value="Rax2_2"/>
    <property type="match status" value="1"/>
</dbReference>
<dbReference type="Pfam" id="PF20843">
    <property type="entry name" value="Rax2_3"/>
    <property type="match status" value="1"/>
</dbReference>
<dbReference type="SUPFAM" id="SSF50965">
    <property type="entry name" value="Galactose oxidase, central domain"/>
    <property type="match status" value="1"/>
</dbReference>